<organism>
    <name type="scientific">Salmonella agona (strain SL483)</name>
    <dbReference type="NCBI Taxonomy" id="454166"/>
    <lineage>
        <taxon>Bacteria</taxon>
        <taxon>Pseudomonadati</taxon>
        <taxon>Pseudomonadota</taxon>
        <taxon>Gammaproteobacteria</taxon>
        <taxon>Enterobacterales</taxon>
        <taxon>Enterobacteriaceae</taxon>
        <taxon>Salmonella</taxon>
    </lineage>
</organism>
<protein>
    <recommendedName>
        <fullName evidence="1">7-cyano-7-deazaguanine synthase</fullName>
        <ecNumber evidence="1">6.3.4.20</ecNumber>
    </recommendedName>
    <alternativeName>
        <fullName evidence="1">7-cyano-7-carbaguanine synthase</fullName>
    </alternativeName>
    <alternativeName>
        <fullName evidence="1">PreQ(0) synthase</fullName>
    </alternativeName>
    <alternativeName>
        <fullName evidence="1">Queuosine biosynthesis protein QueC</fullName>
    </alternativeName>
</protein>
<comment type="function">
    <text evidence="1">Catalyzes the ATP-dependent conversion of 7-carboxy-7-deazaguanine (CDG) to 7-cyano-7-deazaguanine (preQ(0)).</text>
</comment>
<comment type="catalytic activity">
    <reaction evidence="1">
        <text>7-carboxy-7-deazaguanine + NH4(+) + ATP = 7-cyano-7-deazaguanine + ADP + phosphate + H2O + H(+)</text>
        <dbReference type="Rhea" id="RHEA:27982"/>
        <dbReference type="ChEBI" id="CHEBI:15377"/>
        <dbReference type="ChEBI" id="CHEBI:15378"/>
        <dbReference type="ChEBI" id="CHEBI:28938"/>
        <dbReference type="ChEBI" id="CHEBI:30616"/>
        <dbReference type="ChEBI" id="CHEBI:43474"/>
        <dbReference type="ChEBI" id="CHEBI:45075"/>
        <dbReference type="ChEBI" id="CHEBI:61036"/>
        <dbReference type="ChEBI" id="CHEBI:456216"/>
        <dbReference type="EC" id="6.3.4.20"/>
    </reaction>
</comment>
<comment type="cofactor">
    <cofactor evidence="1">
        <name>Zn(2+)</name>
        <dbReference type="ChEBI" id="CHEBI:29105"/>
    </cofactor>
    <text evidence="1">Binds 1 zinc ion per subunit.</text>
</comment>
<comment type="pathway">
    <text evidence="1">Purine metabolism; 7-cyano-7-deazaguanine biosynthesis.</text>
</comment>
<comment type="similarity">
    <text evidence="1">Belongs to the QueC family.</text>
</comment>
<reference key="1">
    <citation type="journal article" date="2011" name="J. Bacteriol.">
        <title>Comparative genomics of 28 Salmonella enterica isolates: evidence for CRISPR-mediated adaptive sublineage evolution.</title>
        <authorList>
            <person name="Fricke W.F."/>
            <person name="Mammel M.K."/>
            <person name="McDermott P.F."/>
            <person name="Tartera C."/>
            <person name="White D.G."/>
            <person name="Leclerc J.E."/>
            <person name="Ravel J."/>
            <person name="Cebula T.A."/>
        </authorList>
    </citation>
    <scope>NUCLEOTIDE SEQUENCE [LARGE SCALE GENOMIC DNA]</scope>
    <source>
        <strain>SL483</strain>
    </source>
</reference>
<keyword id="KW-0067">ATP-binding</keyword>
<keyword id="KW-0436">Ligase</keyword>
<keyword id="KW-0479">Metal-binding</keyword>
<keyword id="KW-0547">Nucleotide-binding</keyword>
<keyword id="KW-0671">Queuosine biosynthesis</keyword>
<keyword id="KW-0862">Zinc</keyword>
<proteinExistence type="inferred from homology"/>
<name>QUEC_SALA4</name>
<evidence type="ECO:0000255" key="1">
    <source>
        <dbReference type="HAMAP-Rule" id="MF_01633"/>
    </source>
</evidence>
<sequence>MKRAVVVFSGGQDSTTCLAQARHQYDEVHCVTFDYGQRHRAEIDVARALALKLGARAHKVLDVTLLNELAVSSLTRDSIPVPDYEPNADGIPNTFVPGRNILFLTLAAIYAYQVKAEAVITGVCETDFSGYPDCRDEFVKALNHAVNLGMAKDIRFETPLMWIDKAETWALADYWGQLDLVREETLTCYNGIKGDGCGHCAACNLRANGLNHYLSNKAAVMAAMKQKTGLR</sequence>
<gene>
    <name evidence="1" type="primary">queC</name>
    <name type="ordered locus">SeAg_B0495</name>
</gene>
<feature type="chain" id="PRO_1000186627" description="7-cyano-7-deazaguanine synthase">
    <location>
        <begin position="1"/>
        <end position="231"/>
    </location>
</feature>
<feature type="binding site" evidence="1">
    <location>
        <begin position="8"/>
        <end position="18"/>
    </location>
    <ligand>
        <name>ATP</name>
        <dbReference type="ChEBI" id="CHEBI:30616"/>
    </ligand>
</feature>
<feature type="binding site" evidence="1">
    <location>
        <position position="188"/>
    </location>
    <ligand>
        <name>Zn(2+)</name>
        <dbReference type="ChEBI" id="CHEBI:29105"/>
    </ligand>
</feature>
<feature type="binding site" evidence="1">
    <location>
        <position position="197"/>
    </location>
    <ligand>
        <name>Zn(2+)</name>
        <dbReference type="ChEBI" id="CHEBI:29105"/>
    </ligand>
</feature>
<feature type="binding site" evidence="1">
    <location>
        <position position="200"/>
    </location>
    <ligand>
        <name>Zn(2+)</name>
        <dbReference type="ChEBI" id="CHEBI:29105"/>
    </ligand>
</feature>
<feature type="binding site" evidence="1">
    <location>
        <position position="203"/>
    </location>
    <ligand>
        <name>Zn(2+)</name>
        <dbReference type="ChEBI" id="CHEBI:29105"/>
    </ligand>
</feature>
<accession>B5EXJ5</accession>
<dbReference type="EC" id="6.3.4.20" evidence="1"/>
<dbReference type="EMBL" id="CP001138">
    <property type="protein sequence ID" value="ACH48760.1"/>
    <property type="molecule type" value="Genomic_DNA"/>
</dbReference>
<dbReference type="RefSeq" id="WP_000817201.1">
    <property type="nucleotide sequence ID" value="NC_011149.1"/>
</dbReference>
<dbReference type="SMR" id="B5EXJ5"/>
<dbReference type="KEGG" id="sea:SeAg_B0495"/>
<dbReference type="HOGENOM" id="CLU_081854_0_0_6"/>
<dbReference type="UniPathway" id="UPA00391"/>
<dbReference type="Proteomes" id="UP000008819">
    <property type="component" value="Chromosome"/>
</dbReference>
<dbReference type="GO" id="GO:0005524">
    <property type="term" value="F:ATP binding"/>
    <property type="evidence" value="ECO:0007669"/>
    <property type="project" value="UniProtKB-UniRule"/>
</dbReference>
<dbReference type="GO" id="GO:0016879">
    <property type="term" value="F:ligase activity, forming carbon-nitrogen bonds"/>
    <property type="evidence" value="ECO:0007669"/>
    <property type="project" value="UniProtKB-UniRule"/>
</dbReference>
<dbReference type="GO" id="GO:0008270">
    <property type="term" value="F:zinc ion binding"/>
    <property type="evidence" value="ECO:0007669"/>
    <property type="project" value="UniProtKB-UniRule"/>
</dbReference>
<dbReference type="GO" id="GO:0008616">
    <property type="term" value="P:queuosine biosynthetic process"/>
    <property type="evidence" value="ECO:0007669"/>
    <property type="project" value="UniProtKB-UniRule"/>
</dbReference>
<dbReference type="CDD" id="cd01995">
    <property type="entry name" value="QueC-like"/>
    <property type="match status" value="1"/>
</dbReference>
<dbReference type="FunFam" id="3.40.50.620:FF:000017">
    <property type="entry name" value="7-cyano-7-deazaguanine synthase"/>
    <property type="match status" value="1"/>
</dbReference>
<dbReference type="Gene3D" id="3.40.50.620">
    <property type="entry name" value="HUPs"/>
    <property type="match status" value="1"/>
</dbReference>
<dbReference type="HAMAP" id="MF_01633">
    <property type="entry name" value="QueC"/>
    <property type="match status" value="1"/>
</dbReference>
<dbReference type="InterPro" id="IPR018317">
    <property type="entry name" value="QueC"/>
</dbReference>
<dbReference type="InterPro" id="IPR014729">
    <property type="entry name" value="Rossmann-like_a/b/a_fold"/>
</dbReference>
<dbReference type="NCBIfam" id="TIGR00364">
    <property type="entry name" value="7-cyano-7-deazaguanine synthase QueC"/>
    <property type="match status" value="1"/>
</dbReference>
<dbReference type="NCBIfam" id="NF008317">
    <property type="entry name" value="PRK11106.1"/>
    <property type="match status" value="1"/>
</dbReference>
<dbReference type="PANTHER" id="PTHR42914">
    <property type="entry name" value="7-CYANO-7-DEAZAGUANINE SYNTHASE"/>
    <property type="match status" value="1"/>
</dbReference>
<dbReference type="PANTHER" id="PTHR42914:SF1">
    <property type="entry name" value="7-CYANO-7-DEAZAGUANINE SYNTHASE"/>
    <property type="match status" value="1"/>
</dbReference>
<dbReference type="Pfam" id="PF06508">
    <property type="entry name" value="QueC"/>
    <property type="match status" value="1"/>
</dbReference>
<dbReference type="PIRSF" id="PIRSF006293">
    <property type="entry name" value="ExsB"/>
    <property type="match status" value="1"/>
</dbReference>
<dbReference type="SUPFAM" id="SSF52402">
    <property type="entry name" value="Adenine nucleotide alpha hydrolases-like"/>
    <property type="match status" value="1"/>
</dbReference>